<organism>
    <name type="scientific">Acinetobacter baylyi (strain ATCC 33305 / BD413 / ADP1)</name>
    <dbReference type="NCBI Taxonomy" id="62977"/>
    <lineage>
        <taxon>Bacteria</taxon>
        <taxon>Pseudomonadati</taxon>
        <taxon>Pseudomonadota</taxon>
        <taxon>Gammaproteobacteria</taxon>
        <taxon>Moraxellales</taxon>
        <taxon>Moraxellaceae</taxon>
        <taxon>Acinetobacter</taxon>
    </lineage>
</organism>
<proteinExistence type="inferred from homology"/>
<gene>
    <name evidence="1" type="primary">tsf</name>
    <name type="ordered locus">ACIAD2268</name>
</gene>
<evidence type="ECO:0000255" key="1">
    <source>
        <dbReference type="HAMAP-Rule" id="MF_00050"/>
    </source>
</evidence>
<keyword id="KW-0963">Cytoplasm</keyword>
<keyword id="KW-0251">Elongation factor</keyword>
<keyword id="KW-0648">Protein biosynthesis</keyword>
<protein>
    <recommendedName>
        <fullName evidence="1">Elongation factor Ts</fullName>
        <shortName evidence="1">EF-Ts</shortName>
    </recommendedName>
</protein>
<dbReference type="EMBL" id="CR543861">
    <property type="protein sequence ID" value="CAG69059.1"/>
    <property type="molecule type" value="Genomic_DNA"/>
</dbReference>
<dbReference type="RefSeq" id="WP_004927932.1">
    <property type="nucleotide sequence ID" value="NC_005966.1"/>
</dbReference>
<dbReference type="SMR" id="Q6FA54"/>
<dbReference type="STRING" id="202950.GCA_001485005_00129"/>
<dbReference type="GeneID" id="45234596"/>
<dbReference type="KEGG" id="aci:ACIAD2268"/>
<dbReference type="eggNOG" id="COG0264">
    <property type="taxonomic scope" value="Bacteria"/>
</dbReference>
<dbReference type="HOGENOM" id="CLU_047155_0_2_6"/>
<dbReference type="OrthoDB" id="9808348at2"/>
<dbReference type="BioCyc" id="ASP62977:ACIAD_RS10390-MONOMER"/>
<dbReference type="Proteomes" id="UP000000430">
    <property type="component" value="Chromosome"/>
</dbReference>
<dbReference type="GO" id="GO:0005737">
    <property type="term" value="C:cytoplasm"/>
    <property type="evidence" value="ECO:0007669"/>
    <property type="project" value="UniProtKB-SubCell"/>
</dbReference>
<dbReference type="GO" id="GO:0003746">
    <property type="term" value="F:translation elongation factor activity"/>
    <property type="evidence" value="ECO:0007669"/>
    <property type="project" value="UniProtKB-UniRule"/>
</dbReference>
<dbReference type="CDD" id="cd14275">
    <property type="entry name" value="UBA_EF-Ts"/>
    <property type="match status" value="1"/>
</dbReference>
<dbReference type="FunFam" id="1.10.286.20:FF:000001">
    <property type="entry name" value="Elongation factor Ts"/>
    <property type="match status" value="1"/>
</dbReference>
<dbReference type="FunFam" id="1.10.8.10:FF:000001">
    <property type="entry name" value="Elongation factor Ts"/>
    <property type="match status" value="1"/>
</dbReference>
<dbReference type="FunFam" id="3.30.479.20:FF:000001">
    <property type="entry name" value="Elongation factor Ts"/>
    <property type="match status" value="1"/>
</dbReference>
<dbReference type="Gene3D" id="1.10.286.20">
    <property type="match status" value="1"/>
</dbReference>
<dbReference type="Gene3D" id="1.10.8.10">
    <property type="entry name" value="DNA helicase RuvA subunit, C-terminal domain"/>
    <property type="match status" value="1"/>
</dbReference>
<dbReference type="Gene3D" id="3.30.479.20">
    <property type="entry name" value="Elongation factor Ts, dimerisation domain"/>
    <property type="match status" value="2"/>
</dbReference>
<dbReference type="HAMAP" id="MF_00050">
    <property type="entry name" value="EF_Ts"/>
    <property type="match status" value="1"/>
</dbReference>
<dbReference type="InterPro" id="IPR036402">
    <property type="entry name" value="EF-Ts_dimer_sf"/>
</dbReference>
<dbReference type="InterPro" id="IPR001816">
    <property type="entry name" value="Transl_elong_EFTs/EF1B"/>
</dbReference>
<dbReference type="InterPro" id="IPR014039">
    <property type="entry name" value="Transl_elong_EFTs/EF1B_dimer"/>
</dbReference>
<dbReference type="InterPro" id="IPR018101">
    <property type="entry name" value="Transl_elong_Ts_CS"/>
</dbReference>
<dbReference type="InterPro" id="IPR009060">
    <property type="entry name" value="UBA-like_sf"/>
</dbReference>
<dbReference type="NCBIfam" id="TIGR00116">
    <property type="entry name" value="tsf"/>
    <property type="match status" value="1"/>
</dbReference>
<dbReference type="PANTHER" id="PTHR11741">
    <property type="entry name" value="ELONGATION FACTOR TS"/>
    <property type="match status" value="1"/>
</dbReference>
<dbReference type="PANTHER" id="PTHR11741:SF0">
    <property type="entry name" value="ELONGATION FACTOR TS, MITOCHONDRIAL"/>
    <property type="match status" value="1"/>
</dbReference>
<dbReference type="Pfam" id="PF00889">
    <property type="entry name" value="EF_TS"/>
    <property type="match status" value="1"/>
</dbReference>
<dbReference type="SUPFAM" id="SSF54713">
    <property type="entry name" value="Elongation factor Ts (EF-Ts), dimerisation domain"/>
    <property type="match status" value="1"/>
</dbReference>
<dbReference type="SUPFAM" id="SSF46934">
    <property type="entry name" value="UBA-like"/>
    <property type="match status" value="1"/>
</dbReference>
<dbReference type="PROSITE" id="PS01126">
    <property type="entry name" value="EF_TS_1"/>
    <property type="match status" value="1"/>
</dbReference>
<dbReference type="PROSITE" id="PS01127">
    <property type="entry name" value="EF_TS_2"/>
    <property type="match status" value="1"/>
</dbReference>
<accession>Q6FA54</accession>
<feature type="chain" id="PRO_0000161062" description="Elongation factor Ts">
    <location>
        <begin position="1"/>
        <end position="291"/>
    </location>
</feature>
<feature type="region of interest" description="Involved in Mg(2+) ion dislocation from EF-Tu" evidence="1">
    <location>
        <begin position="80"/>
        <end position="83"/>
    </location>
</feature>
<comment type="function">
    <text evidence="1">Associates with the EF-Tu.GDP complex and induces the exchange of GDP to GTP. It remains bound to the aminoacyl-tRNA.EF-Tu.GTP complex up to the GTP hydrolysis stage on the ribosome.</text>
</comment>
<comment type="subcellular location">
    <subcellularLocation>
        <location evidence="1">Cytoplasm</location>
    </subcellularLocation>
</comment>
<comment type="similarity">
    <text evidence="1">Belongs to the EF-Ts family.</text>
</comment>
<reference key="1">
    <citation type="journal article" date="2004" name="Nucleic Acids Res.">
        <title>Unique features revealed by the genome sequence of Acinetobacter sp. ADP1, a versatile and naturally transformation competent bacterium.</title>
        <authorList>
            <person name="Barbe V."/>
            <person name="Vallenet D."/>
            <person name="Fonknechten N."/>
            <person name="Kreimeyer A."/>
            <person name="Oztas S."/>
            <person name="Labarre L."/>
            <person name="Cruveiller S."/>
            <person name="Robert C."/>
            <person name="Duprat S."/>
            <person name="Wincker P."/>
            <person name="Ornston L.N."/>
            <person name="Weissenbach J."/>
            <person name="Marliere P."/>
            <person name="Cohen G.N."/>
            <person name="Medigue C."/>
        </authorList>
    </citation>
    <scope>NUCLEOTIDE SEQUENCE [LARGE SCALE GENOMIC DNA]</scope>
    <source>
        <strain>ATCC 33305 / BD413 / ADP1</strain>
    </source>
</reference>
<sequence>MTAITASMVKELRDRTGLAMMECKKALTEANGDIELAIDNLRKSGQAKAAKKAGNIAADGAITIVQDGNKAVLVEVNCQTDFVAKDENFSNFSNAVAKAILASGETDAEKVAELKLEDGQSVEEARIALVQKIGENIQVRRAKIVEGENLAVYKHGLRIGVVVSYTGSAETGKGIAMHVAAFNPVAVSAEAVPADLVAKEKEIAEAKAIESGKPANIVEKMVSGSVEKYLNEVALDRQMYVIDNDKKVADVLKATATNIVEFVRFEVGEGIEKKAEMSFAEEVAAAQAAAK</sequence>
<name>EFTS_ACIAD</name>